<keyword id="KW-0067">ATP-binding</keyword>
<keyword id="KW-0119">Carbohydrate metabolism</keyword>
<keyword id="KW-0320">Glycogen biosynthesis</keyword>
<keyword id="KW-0321">Glycogen metabolism</keyword>
<keyword id="KW-0547">Nucleotide-binding</keyword>
<keyword id="KW-0548">Nucleotidyltransferase</keyword>
<keyword id="KW-0808">Transferase</keyword>
<proteinExistence type="inferred from homology"/>
<accession>A7FNX3</accession>
<protein>
    <recommendedName>
        <fullName evidence="1">Glucose-1-phosphate adenylyltransferase</fullName>
        <ecNumber evidence="1">2.7.7.27</ecNumber>
    </recommendedName>
    <alternativeName>
        <fullName evidence="1">ADP-glucose pyrophosphorylase</fullName>
        <shortName evidence="1">ADPGlc PPase</shortName>
    </alternativeName>
    <alternativeName>
        <fullName evidence="1">ADP-glucose synthase</fullName>
    </alternativeName>
</protein>
<gene>
    <name evidence="1" type="primary">glgC</name>
    <name type="ordered locus">YpsIP31758_4004</name>
</gene>
<evidence type="ECO:0000255" key="1">
    <source>
        <dbReference type="HAMAP-Rule" id="MF_00624"/>
    </source>
</evidence>
<name>GLGC_YERP3</name>
<reference key="1">
    <citation type="journal article" date="2007" name="PLoS Genet.">
        <title>The complete genome sequence of Yersinia pseudotuberculosis IP31758, the causative agent of Far East scarlet-like fever.</title>
        <authorList>
            <person name="Eppinger M."/>
            <person name="Rosovitz M.J."/>
            <person name="Fricke W.F."/>
            <person name="Rasko D.A."/>
            <person name="Kokorina G."/>
            <person name="Fayolle C."/>
            <person name="Lindler L.E."/>
            <person name="Carniel E."/>
            <person name="Ravel J."/>
        </authorList>
    </citation>
    <scope>NUCLEOTIDE SEQUENCE [LARGE SCALE GENOMIC DNA]</scope>
    <source>
        <strain>IP 31758</strain>
    </source>
</reference>
<sequence length="428" mass="47758">MVRFESTDSLMLARQLPNKTVALILAGGRGSRLKDLTATRAKPAVHFGGKFRIIDFALSNCLNSGVRRIGVITQYQSHTLVQHIQRGWSFLNEEMNEFVDLLPAQQRLSTEQWYKGTADAVCQNLDIIRRYDAEYIVILAGDHIYKMDYSRMLLDHVEKGAECTVACIPVPISEGSEFGIMEVTADYQITAFYEKPANPPPIPGDPSNALASMGIYIFNADYLFKLLEEDNNTPGSSHDFGKDIIPQLTARKVVWAHPFDLSCVTSNAELPPYWRDVGTLDAYWRANLDLASVTPELDMYDRAWPIRTHMEPLPPAKFVQDRSGSHGMTMNSLVSGGCIVSGSVVVHSVLFPRVRVNSFCTIDSSLLLPDVHVGRSCRLRRCIIDRACHIPEGMVIGENADEDSARFYRSEGGVVLVTRDMLAKLEAK</sequence>
<comment type="function">
    <text evidence="1">Involved in the biosynthesis of ADP-glucose, a building block required for the elongation reactions to produce glycogen. Catalyzes the reaction between ATP and alpha-D-glucose 1-phosphate (G1P) to produce pyrophosphate and ADP-Glc.</text>
</comment>
<comment type="catalytic activity">
    <reaction evidence="1">
        <text>alpha-D-glucose 1-phosphate + ATP + H(+) = ADP-alpha-D-glucose + diphosphate</text>
        <dbReference type="Rhea" id="RHEA:12120"/>
        <dbReference type="ChEBI" id="CHEBI:15378"/>
        <dbReference type="ChEBI" id="CHEBI:30616"/>
        <dbReference type="ChEBI" id="CHEBI:33019"/>
        <dbReference type="ChEBI" id="CHEBI:57498"/>
        <dbReference type="ChEBI" id="CHEBI:58601"/>
        <dbReference type="EC" id="2.7.7.27"/>
    </reaction>
</comment>
<comment type="pathway">
    <text evidence="1">Glycan biosynthesis; glycogen biosynthesis.</text>
</comment>
<comment type="subunit">
    <text evidence="1">Homotetramer.</text>
</comment>
<comment type="similarity">
    <text evidence="1">Belongs to the bacterial/plant glucose-1-phosphate adenylyltransferase family.</text>
</comment>
<feature type="chain" id="PRO_1000061388" description="Glucose-1-phosphate adenylyltransferase">
    <location>
        <begin position="1"/>
        <end position="428"/>
    </location>
</feature>
<feature type="binding site" evidence="1">
    <location>
        <position position="114"/>
    </location>
    <ligand>
        <name>alpha-D-glucose 1-phosphate</name>
        <dbReference type="ChEBI" id="CHEBI:58601"/>
    </ligand>
</feature>
<feature type="binding site" evidence="1">
    <location>
        <position position="179"/>
    </location>
    <ligand>
        <name>alpha-D-glucose 1-phosphate</name>
        <dbReference type="ChEBI" id="CHEBI:58601"/>
    </ligand>
</feature>
<feature type="binding site" evidence="1">
    <location>
        <begin position="194"/>
        <end position="195"/>
    </location>
    <ligand>
        <name>alpha-D-glucose 1-phosphate</name>
        <dbReference type="ChEBI" id="CHEBI:58601"/>
    </ligand>
</feature>
<feature type="binding site" evidence="1">
    <location>
        <position position="212"/>
    </location>
    <ligand>
        <name>alpha-D-glucose 1-phosphate</name>
        <dbReference type="ChEBI" id="CHEBI:58601"/>
    </ligand>
</feature>
<dbReference type="EC" id="2.7.7.27" evidence="1"/>
<dbReference type="EMBL" id="CP000720">
    <property type="protein sequence ID" value="ABS46030.1"/>
    <property type="molecule type" value="Genomic_DNA"/>
</dbReference>
<dbReference type="RefSeq" id="WP_012105899.1">
    <property type="nucleotide sequence ID" value="NC_009708.1"/>
</dbReference>
<dbReference type="SMR" id="A7FNX3"/>
<dbReference type="GeneID" id="49784218"/>
<dbReference type="KEGG" id="ypi:YpsIP31758_4004"/>
<dbReference type="HOGENOM" id="CLU_029499_14_1_6"/>
<dbReference type="UniPathway" id="UPA00164"/>
<dbReference type="Proteomes" id="UP000002412">
    <property type="component" value="Chromosome"/>
</dbReference>
<dbReference type="GO" id="GO:0005524">
    <property type="term" value="F:ATP binding"/>
    <property type="evidence" value="ECO:0007669"/>
    <property type="project" value="UniProtKB-KW"/>
</dbReference>
<dbReference type="GO" id="GO:0008878">
    <property type="term" value="F:glucose-1-phosphate adenylyltransferase activity"/>
    <property type="evidence" value="ECO:0007669"/>
    <property type="project" value="UniProtKB-UniRule"/>
</dbReference>
<dbReference type="GO" id="GO:0005978">
    <property type="term" value="P:glycogen biosynthetic process"/>
    <property type="evidence" value="ECO:0007669"/>
    <property type="project" value="UniProtKB-UniRule"/>
</dbReference>
<dbReference type="CDD" id="cd02508">
    <property type="entry name" value="ADP_Glucose_PP"/>
    <property type="match status" value="1"/>
</dbReference>
<dbReference type="CDD" id="cd04651">
    <property type="entry name" value="LbH_G1P_AT_C"/>
    <property type="match status" value="1"/>
</dbReference>
<dbReference type="FunFam" id="3.90.550.10:FF:000014">
    <property type="entry name" value="Glucose-1-phosphate adenylyltransferase"/>
    <property type="match status" value="1"/>
</dbReference>
<dbReference type="Gene3D" id="2.160.10.10">
    <property type="entry name" value="Hexapeptide repeat proteins"/>
    <property type="match status" value="1"/>
</dbReference>
<dbReference type="Gene3D" id="3.90.550.10">
    <property type="entry name" value="Spore Coat Polysaccharide Biosynthesis Protein SpsA, Chain A"/>
    <property type="match status" value="1"/>
</dbReference>
<dbReference type="HAMAP" id="MF_00624">
    <property type="entry name" value="GlgC"/>
    <property type="match status" value="1"/>
</dbReference>
<dbReference type="InterPro" id="IPR011831">
    <property type="entry name" value="ADP-Glc_PPase"/>
</dbReference>
<dbReference type="InterPro" id="IPR005836">
    <property type="entry name" value="ADP_Glu_pyroP_CS"/>
</dbReference>
<dbReference type="InterPro" id="IPR023049">
    <property type="entry name" value="GlgC_bac"/>
</dbReference>
<dbReference type="InterPro" id="IPR056818">
    <property type="entry name" value="GlmU/GlgC-like_hexapep"/>
</dbReference>
<dbReference type="InterPro" id="IPR005835">
    <property type="entry name" value="NTP_transferase_dom"/>
</dbReference>
<dbReference type="InterPro" id="IPR029044">
    <property type="entry name" value="Nucleotide-diphossugar_trans"/>
</dbReference>
<dbReference type="InterPro" id="IPR011004">
    <property type="entry name" value="Trimer_LpxA-like_sf"/>
</dbReference>
<dbReference type="NCBIfam" id="TIGR02091">
    <property type="entry name" value="glgC"/>
    <property type="match status" value="1"/>
</dbReference>
<dbReference type="NCBIfam" id="NF001947">
    <property type="entry name" value="PRK00725.1"/>
    <property type="match status" value="1"/>
</dbReference>
<dbReference type="NCBIfam" id="NF002023">
    <property type="entry name" value="PRK00844.1"/>
    <property type="match status" value="1"/>
</dbReference>
<dbReference type="PANTHER" id="PTHR43523:SF2">
    <property type="entry name" value="GLUCOSE-1-PHOSPHATE ADENYLYLTRANSFERASE"/>
    <property type="match status" value="1"/>
</dbReference>
<dbReference type="PANTHER" id="PTHR43523">
    <property type="entry name" value="GLUCOSE-1-PHOSPHATE ADENYLYLTRANSFERASE-RELATED"/>
    <property type="match status" value="1"/>
</dbReference>
<dbReference type="Pfam" id="PF24894">
    <property type="entry name" value="Hexapep_GlmU"/>
    <property type="match status" value="1"/>
</dbReference>
<dbReference type="Pfam" id="PF00483">
    <property type="entry name" value="NTP_transferase"/>
    <property type="match status" value="1"/>
</dbReference>
<dbReference type="SUPFAM" id="SSF53448">
    <property type="entry name" value="Nucleotide-diphospho-sugar transferases"/>
    <property type="match status" value="1"/>
</dbReference>
<dbReference type="SUPFAM" id="SSF51161">
    <property type="entry name" value="Trimeric LpxA-like enzymes"/>
    <property type="match status" value="1"/>
</dbReference>
<dbReference type="PROSITE" id="PS00808">
    <property type="entry name" value="ADP_GLC_PYROPHOSPH_1"/>
    <property type="match status" value="1"/>
</dbReference>
<dbReference type="PROSITE" id="PS00809">
    <property type="entry name" value="ADP_GLC_PYROPHOSPH_2"/>
    <property type="match status" value="1"/>
</dbReference>
<dbReference type="PROSITE" id="PS00810">
    <property type="entry name" value="ADP_GLC_PYROPHOSPH_3"/>
    <property type="match status" value="1"/>
</dbReference>
<organism>
    <name type="scientific">Yersinia pseudotuberculosis serotype O:1b (strain IP 31758)</name>
    <dbReference type="NCBI Taxonomy" id="349747"/>
    <lineage>
        <taxon>Bacteria</taxon>
        <taxon>Pseudomonadati</taxon>
        <taxon>Pseudomonadota</taxon>
        <taxon>Gammaproteobacteria</taxon>
        <taxon>Enterobacterales</taxon>
        <taxon>Yersiniaceae</taxon>
        <taxon>Yersinia</taxon>
    </lineage>
</organism>